<protein>
    <recommendedName>
        <fullName evidence="1">Peptide chain release factor 3</fullName>
        <shortName evidence="1">RF-3</shortName>
    </recommendedName>
</protein>
<feature type="chain" id="PRO_1000202468" description="Peptide chain release factor 3">
    <location>
        <begin position="1"/>
        <end position="522"/>
    </location>
</feature>
<feature type="domain" description="tr-type G">
    <location>
        <begin position="10"/>
        <end position="277"/>
    </location>
</feature>
<feature type="binding site" evidence="1">
    <location>
        <begin position="19"/>
        <end position="26"/>
    </location>
    <ligand>
        <name>GTP</name>
        <dbReference type="ChEBI" id="CHEBI:37565"/>
    </ligand>
</feature>
<feature type="binding site" evidence="1">
    <location>
        <begin position="87"/>
        <end position="91"/>
    </location>
    <ligand>
        <name>GTP</name>
        <dbReference type="ChEBI" id="CHEBI:37565"/>
    </ligand>
</feature>
<feature type="binding site" evidence="1">
    <location>
        <begin position="141"/>
        <end position="144"/>
    </location>
    <ligand>
        <name>GTP</name>
        <dbReference type="ChEBI" id="CHEBI:37565"/>
    </ligand>
</feature>
<organism>
    <name type="scientific">Listeria monocytogenes serotype 4b (strain CLIP80459)</name>
    <dbReference type="NCBI Taxonomy" id="568819"/>
    <lineage>
        <taxon>Bacteria</taxon>
        <taxon>Bacillati</taxon>
        <taxon>Bacillota</taxon>
        <taxon>Bacilli</taxon>
        <taxon>Bacillales</taxon>
        <taxon>Listeriaceae</taxon>
        <taxon>Listeria</taxon>
    </lineage>
</organism>
<evidence type="ECO:0000255" key="1">
    <source>
        <dbReference type="HAMAP-Rule" id="MF_00072"/>
    </source>
</evidence>
<accession>C1L1Q9</accession>
<gene>
    <name evidence="1" type="primary">prfC</name>
    <name type="ordered locus">Lm4b_01008</name>
</gene>
<name>RF3_LISMC</name>
<proteinExistence type="inferred from homology"/>
<comment type="function">
    <text evidence="1">Increases the formation of ribosomal termination complexes and stimulates activities of RF-1 and RF-2. It binds guanine nucleotides and has strong preference for UGA stop codons. It may interact directly with the ribosome. The stimulation of RF-1 and RF-2 is significantly reduced by GTP and GDP, but not by GMP.</text>
</comment>
<comment type="subcellular location">
    <subcellularLocation>
        <location evidence="1">Cytoplasm</location>
    </subcellularLocation>
</comment>
<comment type="similarity">
    <text evidence="1">Belongs to the TRAFAC class translation factor GTPase superfamily. Classic translation factor GTPase family. PrfC subfamily.</text>
</comment>
<dbReference type="EMBL" id="FM242711">
    <property type="protein sequence ID" value="CAS04774.1"/>
    <property type="molecule type" value="Genomic_DNA"/>
</dbReference>
<dbReference type="RefSeq" id="WP_012681206.1">
    <property type="nucleotide sequence ID" value="NC_012488.1"/>
</dbReference>
<dbReference type="SMR" id="C1L1Q9"/>
<dbReference type="KEGG" id="lmc:Lm4b_01008"/>
<dbReference type="HOGENOM" id="CLU_002794_2_1_9"/>
<dbReference type="GO" id="GO:0005829">
    <property type="term" value="C:cytosol"/>
    <property type="evidence" value="ECO:0007669"/>
    <property type="project" value="TreeGrafter"/>
</dbReference>
<dbReference type="GO" id="GO:0005525">
    <property type="term" value="F:GTP binding"/>
    <property type="evidence" value="ECO:0007669"/>
    <property type="project" value="UniProtKB-UniRule"/>
</dbReference>
<dbReference type="GO" id="GO:0003924">
    <property type="term" value="F:GTPase activity"/>
    <property type="evidence" value="ECO:0007669"/>
    <property type="project" value="InterPro"/>
</dbReference>
<dbReference type="GO" id="GO:0016150">
    <property type="term" value="F:translation release factor activity, codon nonspecific"/>
    <property type="evidence" value="ECO:0007669"/>
    <property type="project" value="TreeGrafter"/>
</dbReference>
<dbReference type="GO" id="GO:0016149">
    <property type="term" value="F:translation release factor activity, codon specific"/>
    <property type="evidence" value="ECO:0007669"/>
    <property type="project" value="UniProtKB-UniRule"/>
</dbReference>
<dbReference type="GO" id="GO:0006449">
    <property type="term" value="P:regulation of translational termination"/>
    <property type="evidence" value="ECO:0007669"/>
    <property type="project" value="UniProtKB-UniRule"/>
</dbReference>
<dbReference type="CDD" id="cd04169">
    <property type="entry name" value="RF3"/>
    <property type="match status" value="1"/>
</dbReference>
<dbReference type="CDD" id="cd03689">
    <property type="entry name" value="RF3_II"/>
    <property type="match status" value="1"/>
</dbReference>
<dbReference type="CDD" id="cd16259">
    <property type="entry name" value="RF3_III"/>
    <property type="match status" value="1"/>
</dbReference>
<dbReference type="FunFam" id="2.40.30.10:FF:000040">
    <property type="entry name" value="Peptide chain release factor 3"/>
    <property type="match status" value="1"/>
</dbReference>
<dbReference type="FunFam" id="3.30.70.3280:FF:000001">
    <property type="entry name" value="Peptide chain release factor 3"/>
    <property type="match status" value="1"/>
</dbReference>
<dbReference type="FunFam" id="3.40.50.300:FF:000542">
    <property type="entry name" value="Peptide chain release factor 3"/>
    <property type="match status" value="1"/>
</dbReference>
<dbReference type="Gene3D" id="3.40.50.300">
    <property type="entry name" value="P-loop containing nucleotide triphosphate hydrolases"/>
    <property type="match status" value="1"/>
</dbReference>
<dbReference type="Gene3D" id="3.30.70.3280">
    <property type="entry name" value="Peptide chain release factor 3, domain III"/>
    <property type="match status" value="1"/>
</dbReference>
<dbReference type="Gene3D" id="2.40.30.10">
    <property type="entry name" value="Translation factors"/>
    <property type="match status" value="1"/>
</dbReference>
<dbReference type="HAMAP" id="MF_00072">
    <property type="entry name" value="Rel_fac_3"/>
    <property type="match status" value="1"/>
</dbReference>
<dbReference type="InterPro" id="IPR053905">
    <property type="entry name" value="EF-G-like_DII"/>
</dbReference>
<dbReference type="InterPro" id="IPR035647">
    <property type="entry name" value="EFG_III/V"/>
</dbReference>
<dbReference type="InterPro" id="IPR031157">
    <property type="entry name" value="G_TR_CS"/>
</dbReference>
<dbReference type="InterPro" id="IPR027417">
    <property type="entry name" value="P-loop_NTPase"/>
</dbReference>
<dbReference type="InterPro" id="IPR004548">
    <property type="entry name" value="PrfC"/>
</dbReference>
<dbReference type="InterPro" id="IPR032090">
    <property type="entry name" value="RF3_C"/>
</dbReference>
<dbReference type="InterPro" id="IPR038467">
    <property type="entry name" value="RF3_dom_3_sf"/>
</dbReference>
<dbReference type="InterPro" id="IPR041732">
    <property type="entry name" value="RF3_GTP-bd"/>
</dbReference>
<dbReference type="InterPro" id="IPR005225">
    <property type="entry name" value="Small_GTP-bd"/>
</dbReference>
<dbReference type="InterPro" id="IPR000795">
    <property type="entry name" value="T_Tr_GTP-bd_dom"/>
</dbReference>
<dbReference type="InterPro" id="IPR009000">
    <property type="entry name" value="Transl_B-barrel_sf"/>
</dbReference>
<dbReference type="NCBIfam" id="TIGR00503">
    <property type="entry name" value="prfC"/>
    <property type="match status" value="1"/>
</dbReference>
<dbReference type="NCBIfam" id="NF001964">
    <property type="entry name" value="PRK00741.1"/>
    <property type="match status" value="1"/>
</dbReference>
<dbReference type="NCBIfam" id="TIGR00231">
    <property type="entry name" value="small_GTP"/>
    <property type="match status" value="1"/>
</dbReference>
<dbReference type="PANTHER" id="PTHR43556">
    <property type="entry name" value="PEPTIDE CHAIN RELEASE FACTOR RF3"/>
    <property type="match status" value="1"/>
</dbReference>
<dbReference type="PANTHER" id="PTHR43556:SF2">
    <property type="entry name" value="PEPTIDE CHAIN RELEASE FACTOR RF3"/>
    <property type="match status" value="1"/>
</dbReference>
<dbReference type="Pfam" id="PF22042">
    <property type="entry name" value="EF-G_D2"/>
    <property type="match status" value="1"/>
</dbReference>
<dbReference type="Pfam" id="PF00009">
    <property type="entry name" value="GTP_EFTU"/>
    <property type="match status" value="1"/>
</dbReference>
<dbReference type="Pfam" id="PF16658">
    <property type="entry name" value="RF3_C"/>
    <property type="match status" value="1"/>
</dbReference>
<dbReference type="PRINTS" id="PR00315">
    <property type="entry name" value="ELONGATNFCT"/>
</dbReference>
<dbReference type="SUPFAM" id="SSF54980">
    <property type="entry name" value="EF-G C-terminal domain-like"/>
    <property type="match status" value="1"/>
</dbReference>
<dbReference type="SUPFAM" id="SSF52540">
    <property type="entry name" value="P-loop containing nucleoside triphosphate hydrolases"/>
    <property type="match status" value="1"/>
</dbReference>
<dbReference type="SUPFAM" id="SSF50447">
    <property type="entry name" value="Translation proteins"/>
    <property type="match status" value="1"/>
</dbReference>
<dbReference type="PROSITE" id="PS00301">
    <property type="entry name" value="G_TR_1"/>
    <property type="match status" value="1"/>
</dbReference>
<dbReference type="PROSITE" id="PS51722">
    <property type="entry name" value="G_TR_2"/>
    <property type="match status" value="1"/>
</dbReference>
<keyword id="KW-0963">Cytoplasm</keyword>
<keyword id="KW-0342">GTP-binding</keyword>
<keyword id="KW-0547">Nucleotide-binding</keyword>
<keyword id="KW-0648">Protein biosynthesis</keyword>
<sequence length="522" mass="59460">MSQDLQKEVASRKTFAIISHPDAGKTTITEQLLLFGGVIRSAGTVKGKKSGKFATSDWMEIEKQRGISVTSSVMQFDYNGSRINILDTPGHSDFSEDTYRTLMAVDSAVMVIDAAKGIEAQTLKLFKVCRMRGIPIFTFINKMDRQGKMPLELLAELEEVLGIESYPMNWPIGMGKELAGLYDRYHRVIEQYRSEEDERFLPLGEDGDLKEAHAIQKLLYYDQALEEIMLLDEAGNDFSRERIIAGEQTPVFFGSALTNFGVETFLRTFVDFAPSPSSHESNEGVIEADNPKFSGFIFKIQANMNPAHRDRIAFIRICSGEFERGMNVTLTRTGKSMKLANSTQFMADDRETVNRAVAGDIIGLYDTGNYQIGDTITNGSKKLEFEKLPQFTPELFMRVYAKNVMKQKHFHKGVEQLVQEGAIQLFKTWRTEEYIIGAVGQLQFEVFEHRMRGEYNSEIRMEPIGKKIARWVKEEDADEKLSTARSMLVKDRFDQPLFLFENEFAINWFNDKNPDIELTSLL</sequence>
<reference key="1">
    <citation type="journal article" date="2012" name="BMC Genomics">
        <title>Comparative genomics and transcriptomics of lineages I, II, and III strains of Listeria monocytogenes.</title>
        <authorList>
            <person name="Hain T."/>
            <person name="Ghai R."/>
            <person name="Billion A."/>
            <person name="Kuenne C.T."/>
            <person name="Steinweg C."/>
            <person name="Izar B."/>
            <person name="Mohamed W."/>
            <person name="Mraheil M."/>
            <person name="Domann E."/>
            <person name="Schaffrath S."/>
            <person name="Karst U."/>
            <person name="Goesmann A."/>
            <person name="Oehm S."/>
            <person name="Puhler A."/>
            <person name="Merkl R."/>
            <person name="Vorwerk S."/>
            <person name="Glaser P."/>
            <person name="Garrido P."/>
            <person name="Rusniok C."/>
            <person name="Buchrieser C."/>
            <person name="Goebel W."/>
            <person name="Chakraborty T."/>
        </authorList>
    </citation>
    <scope>NUCLEOTIDE SEQUENCE [LARGE SCALE GENOMIC DNA]</scope>
    <source>
        <strain>CLIP80459</strain>
    </source>
</reference>